<evidence type="ECO:0000250" key="1">
    <source>
        <dbReference type="UniProtKB" id="Q5PQX0"/>
    </source>
</evidence>
<evidence type="ECO:0000255" key="2"/>
<evidence type="ECO:0000269" key="3">
    <source>
    </source>
</evidence>
<evidence type="ECO:0000269" key="4">
    <source>
    </source>
</evidence>
<evidence type="ECO:0000269" key="5">
    <source>
    </source>
</evidence>
<evidence type="ECO:0000269" key="6">
    <source>
    </source>
</evidence>
<evidence type="ECO:0000303" key="7">
    <source>
    </source>
</evidence>
<evidence type="ECO:0000303" key="8">
    <source>
    </source>
</evidence>
<evidence type="ECO:0000303" key="9">
    <source>
    </source>
</evidence>
<evidence type="ECO:0000303" key="10">
    <source>
    </source>
</evidence>
<evidence type="ECO:0000305" key="11"/>
<evidence type="ECO:0000305" key="12">
    <source>
    </source>
</evidence>
<evidence type="ECO:0000305" key="13">
    <source>
    </source>
</evidence>
<evidence type="ECO:0000305" key="14">
    <source>
    </source>
</evidence>
<evidence type="ECO:0000312" key="15">
    <source>
        <dbReference type="HGNC" id="HGNC:17729"/>
    </source>
</evidence>
<evidence type="ECO:0007744" key="16">
    <source>
        <dbReference type="PDB" id="2B69"/>
    </source>
</evidence>
<evidence type="ECO:0007744" key="17">
    <source>
        <dbReference type="PDB" id="4LK3"/>
    </source>
</evidence>
<evidence type="ECO:0007744" key="18">
    <source>
        <dbReference type="PDB" id="4M55"/>
    </source>
</evidence>
<evidence type="ECO:0007744" key="19">
    <source>
    </source>
</evidence>
<evidence type="ECO:0007829" key="20">
    <source>
        <dbReference type="PDB" id="2B69"/>
    </source>
</evidence>
<evidence type="ECO:0007829" key="21">
    <source>
        <dbReference type="PDB" id="4LK3"/>
    </source>
</evidence>
<keyword id="KW-0002">3D-structure</keyword>
<keyword id="KW-0007">Acetylation</keyword>
<keyword id="KW-0025">Alternative splicing</keyword>
<keyword id="KW-0210">Decarboxylase</keyword>
<keyword id="KW-0325">Glycoprotein</keyword>
<keyword id="KW-0333">Golgi apparatus</keyword>
<keyword id="KW-0456">Lyase</keyword>
<keyword id="KW-0472">Membrane</keyword>
<keyword id="KW-0520">NAD</keyword>
<keyword id="KW-0597">Phosphoprotein</keyword>
<keyword id="KW-1267">Proteomics identification</keyword>
<keyword id="KW-1185">Reference proteome</keyword>
<keyword id="KW-0735">Signal-anchor</keyword>
<keyword id="KW-0812">Transmembrane</keyword>
<keyword id="KW-1133">Transmembrane helix</keyword>
<name>UXS1_HUMAN</name>
<protein>
    <recommendedName>
        <fullName evidence="11">UDP-glucuronic acid decarboxylase 1</fullName>
        <ecNumber evidence="3 4 5">4.1.1.35</ecNumber>
    </recommendedName>
    <alternativeName>
        <fullName>UDP-glucuronate decarboxylase 1</fullName>
        <shortName>UGD</shortName>
        <shortName>UXS-1</shortName>
        <shortName evidence="10">hUXS</shortName>
        <shortName evidence="9">hUXS1</shortName>
    </alternativeName>
</protein>
<proteinExistence type="evidence at protein level"/>
<comment type="function">
    <text evidence="3 4 5">Catalyzes the NAD-dependent decarboxylation of UDP-glucuronic acid to UDP-xylose (PubMed:22810237, PubMed:23656592, PubMed:25521717). Necessary for the biosynthesis of the core tetrasaccharide in glycosaminoglycan biosynthesis (PubMed:22810237, PubMed:23656592, PubMed:25521717).</text>
</comment>
<comment type="catalytic activity">
    <reaction evidence="3 4 5">
        <text>UDP-alpha-D-glucuronate + H(+) = UDP-alpha-D-xylose + CO2</text>
        <dbReference type="Rhea" id="RHEA:23916"/>
        <dbReference type="ChEBI" id="CHEBI:15378"/>
        <dbReference type="ChEBI" id="CHEBI:16526"/>
        <dbReference type="ChEBI" id="CHEBI:57632"/>
        <dbReference type="ChEBI" id="CHEBI:58052"/>
        <dbReference type="EC" id="4.1.1.35"/>
    </reaction>
    <physiologicalReaction direction="left-to-right" evidence="3 4 5">
        <dbReference type="Rhea" id="RHEA:23917"/>
    </physiologicalReaction>
</comment>
<comment type="cofactor">
    <cofactor evidence="3 5">
        <name>NAD(+)</name>
        <dbReference type="ChEBI" id="CHEBI:57540"/>
    </cofactor>
</comment>
<comment type="biophysicochemical properties">
    <kinetics>
        <KM evidence="3">5.1 mM for UDP-alpha-D-glucuronate</KM>
        <text evidence="3">kcat is 0.2 sec(-1) for UDP-alpha-D-glucuronate.</text>
    </kinetics>
</comment>
<comment type="pathway">
    <text evidence="12 13 14">Nucleotide-sugar biosynthesis; UDP-alpha-D-xylose biosynthesis; UDP-alpha-D-xylose from UDP-alpha-D-glucuronate: step 1/1.</text>
</comment>
<comment type="subunit">
    <text evidence="1 4">Homodimer and homotetramer (PubMed:23656592). Interacts with AKT1 (By similarity).</text>
</comment>
<comment type="subcellular location">
    <subcellularLocation>
        <location evidence="1">Golgi apparatus</location>
        <location evidence="1">Golgi stack membrane</location>
        <topology evidence="11">Single-pass type II membrane protein</topology>
    </subcellularLocation>
</comment>
<comment type="alternative products">
    <event type="alternative splicing"/>
    <isoform>
        <id>Q8NBZ7-1</id>
        <name>1</name>
        <sequence type="displayed"/>
    </isoform>
    <isoform>
        <id>Q8NBZ7-2</id>
        <name>2</name>
        <sequence type="described" ref="VSP_016757"/>
    </isoform>
    <isoform>
        <id>Q8NBZ7-3</id>
        <name>3</name>
        <sequence type="described" ref="VSP_016756"/>
    </isoform>
</comment>
<comment type="similarity">
    <text evidence="11">Belongs to the NAD(P)-dependent epimerase/dehydratase family. UDP-glucuronic acid decarboxylase subfamily.</text>
</comment>
<feature type="chain" id="PRO_0000183269" description="UDP-glucuronic acid decarboxylase 1">
    <location>
        <begin position="1"/>
        <end position="420"/>
    </location>
</feature>
<feature type="topological domain" description="Cytoplasmic" evidence="2">
    <location>
        <begin position="1"/>
        <end position="19"/>
    </location>
</feature>
<feature type="transmembrane region" description="Helical; Signal-anchor for type II membrane protein" evidence="2">
    <location>
        <begin position="20"/>
        <end position="40"/>
    </location>
</feature>
<feature type="topological domain" description="Lumenal" evidence="2">
    <location>
        <begin position="41"/>
        <end position="420"/>
    </location>
</feature>
<feature type="active site" description="Proton acceptor" evidence="4 5">
    <location>
        <position position="231"/>
    </location>
</feature>
<feature type="binding site" evidence="3 5 16 17 18">
    <location>
        <position position="98"/>
    </location>
    <ligand>
        <name>NAD(+)</name>
        <dbReference type="ChEBI" id="CHEBI:57540"/>
    </ligand>
</feature>
<feature type="binding site" evidence="3 5 16 17 18">
    <location>
        <position position="99"/>
    </location>
    <ligand>
        <name>NAD(+)</name>
        <dbReference type="ChEBI" id="CHEBI:57540"/>
    </ligand>
</feature>
<feature type="binding site" evidence="3 5 16 17 18">
    <location>
        <position position="100"/>
    </location>
    <ligand>
        <name>NAD(+)</name>
        <dbReference type="ChEBI" id="CHEBI:57540"/>
    </ligand>
</feature>
<feature type="binding site" evidence="3 5 16 17 18">
    <location>
        <position position="119"/>
    </location>
    <ligand>
        <name>NAD(+)</name>
        <dbReference type="ChEBI" id="CHEBI:57540"/>
    </ligand>
</feature>
<feature type="binding site" evidence="3 5 16 17 18">
    <location>
        <position position="120"/>
    </location>
    <ligand>
        <name>NAD(+)</name>
        <dbReference type="ChEBI" id="CHEBI:57540"/>
    </ligand>
</feature>
<feature type="binding site" evidence="3 5 16 17 18">
    <location>
        <position position="122"/>
    </location>
    <ligand>
        <name>NAD(+)</name>
        <dbReference type="ChEBI" id="CHEBI:57540"/>
    </ligand>
</feature>
<feature type="binding site" evidence="3 5 16 17 18">
    <location>
        <position position="123"/>
    </location>
    <ligand>
        <name>NAD(+)</name>
        <dbReference type="ChEBI" id="CHEBI:57540"/>
    </ligand>
</feature>
<feature type="binding site" evidence="3 5 16 17 18">
    <location>
        <position position="124"/>
    </location>
    <ligand>
        <name>NAD(+)</name>
        <dbReference type="ChEBI" id="CHEBI:57540"/>
    </ligand>
</feature>
<feature type="binding site" evidence="3 5 16 17 18">
    <location>
        <position position="144"/>
    </location>
    <ligand>
        <name>NAD(+)</name>
        <dbReference type="ChEBI" id="CHEBI:57540"/>
    </ligand>
</feature>
<feature type="binding site" evidence="3 5 16 17 18">
    <location>
        <position position="145"/>
    </location>
    <ligand>
        <name>NAD(+)</name>
        <dbReference type="ChEBI" id="CHEBI:57540"/>
    </ligand>
</feature>
<feature type="binding site" evidence="5 17">
    <location>
        <position position="149"/>
    </location>
    <ligand>
        <name>UDP-alpha-D-glucuronate</name>
        <dbReference type="ChEBI" id="CHEBI:58052"/>
    </ligand>
</feature>
<feature type="binding site" evidence="5 17">
    <location>
        <position position="150"/>
    </location>
    <ligand>
        <name>UDP-alpha-D-glucuronate</name>
        <dbReference type="ChEBI" id="CHEBI:58052"/>
    </ligand>
</feature>
<feature type="binding site" evidence="3 5 16 17 18">
    <location>
        <position position="159"/>
    </location>
    <ligand>
        <name>NAD(+)</name>
        <dbReference type="ChEBI" id="CHEBI:57540"/>
    </ligand>
</feature>
<feature type="binding site" evidence="5 18">
    <location>
        <position position="161"/>
    </location>
    <ligand>
        <name>NAD(+)</name>
        <dbReference type="ChEBI" id="CHEBI:57540"/>
    </ligand>
</feature>
<feature type="binding site" evidence="5 17">
    <location>
        <position position="177"/>
    </location>
    <ligand>
        <name>UDP-alpha-D-glucuronate</name>
        <dbReference type="ChEBI" id="CHEBI:58052"/>
    </ligand>
</feature>
<feature type="binding site" evidence="3 5 16 17 18">
    <location>
        <position position="178"/>
    </location>
    <ligand>
        <name>NAD(+)</name>
        <dbReference type="ChEBI" id="CHEBI:57540"/>
    </ligand>
</feature>
<feature type="binding site" evidence="5 17">
    <location>
        <position position="185"/>
    </location>
    <ligand>
        <name>UDP-alpha-D-glucuronate</name>
        <dbReference type="ChEBI" id="CHEBI:58052"/>
    </ligand>
</feature>
<feature type="binding site" evidence="5 17">
    <location>
        <position position="188"/>
    </location>
    <ligand>
        <name>UDP-alpha-D-glucuronate</name>
        <dbReference type="ChEBI" id="CHEBI:58052"/>
    </ligand>
</feature>
<feature type="binding site" evidence="5 17">
    <location>
        <position position="191"/>
    </location>
    <ligand>
        <name>UDP-alpha-D-glucuronate</name>
        <dbReference type="ChEBI" id="CHEBI:58052"/>
    </ligand>
</feature>
<feature type="binding site" evidence="5 17">
    <location>
        <position position="192"/>
    </location>
    <ligand>
        <name>UDP-alpha-D-glucuronate</name>
        <dbReference type="ChEBI" id="CHEBI:58052"/>
    </ligand>
</feature>
<feature type="binding site" evidence="5 17">
    <location>
        <position position="200"/>
    </location>
    <ligand>
        <name>NAD(+)</name>
        <dbReference type="ChEBI" id="CHEBI:57540"/>
    </ligand>
</feature>
<feature type="binding site" evidence="3 16">
    <location>
        <position position="231"/>
    </location>
    <ligand>
        <name>NAD(+)</name>
        <dbReference type="ChEBI" id="CHEBI:57540"/>
    </ligand>
</feature>
<feature type="binding site" evidence="3 5 16 17 18">
    <location>
        <position position="235"/>
    </location>
    <ligand>
        <name>NAD(+)</name>
        <dbReference type="ChEBI" id="CHEBI:57540"/>
    </ligand>
</feature>
<feature type="binding site" evidence="5 17">
    <location>
        <position position="245"/>
    </location>
    <ligand>
        <name>UDP-alpha-D-glucuronate</name>
        <dbReference type="ChEBI" id="CHEBI:58052"/>
    </ligand>
</feature>
<feature type="binding site" evidence="5 17">
    <location>
        <position position="248"/>
    </location>
    <ligand>
        <name>UDP-alpha-D-glucuronate</name>
        <dbReference type="ChEBI" id="CHEBI:58052"/>
    </ligand>
</feature>
<feature type="binding site" evidence="5 17">
    <location>
        <position position="249"/>
    </location>
    <ligand>
        <name>UDP-alpha-D-glucuronate</name>
        <dbReference type="ChEBI" id="CHEBI:58052"/>
    </ligand>
</feature>
<feature type="binding site" evidence="3 5 16 17 18">
    <location>
        <position position="261"/>
    </location>
    <ligand>
        <name>NAD(+)</name>
        <dbReference type="ChEBI" id="CHEBI:57540"/>
    </ligand>
</feature>
<feature type="binding site" evidence="5 17 18">
    <location>
        <position position="267"/>
    </location>
    <ligand>
        <name>NAD(+)</name>
        <dbReference type="ChEBI" id="CHEBI:57540"/>
    </ligand>
</feature>
<feature type="binding site" evidence="3 5 16 17 18">
    <location>
        <position position="272"/>
    </location>
    <ligand>
        <name>NAD(+)</name>
        <dbReference type="ChEBI" id="CHEBI:57540"/>
    </ligand>
</feature>
<feature type="modified residue" description="N-acetylmethionine" evidence="6">
    <location>
        <position position="1"/>
    </location>
</feature>
<feature type="modified residue" description="Phosphothreonine" evidence="19">
    <location>
        <position position="94"/>
    </location>
</feature>
<feature type="glycosylation site" description="N-linked (GlcNAc...) asparagine" evidence="2">
    <location>
        <position position="316"/>
    </location>
</feature>
<feature type="splice variant" id="VSP_016756" description="In isoform 3." evidence="8">
    <location>
        <begin position="1"/>
        <end position="168"/>
    </location>
</feature>
<feature type="splice variant" id="VSP_016757" description="In isoform 2." evidence="8">
    <original>M</original>
    <variation>MSFLLN</variation>
    <location>
        <position position="40"/>
    </location>
</feature>
<feature type="mutagenesis site" description="Reduced UDP-glucuronic acid decarboxylase activity." evidence="3">
    <original>E</original>
    <variation>A</variation>
    <location>
        <position position="204"/>
    </location>
</feature>
<feature type="mutagenesis site" description="Abolished UDP-glucuronic acid decarboxylase activity." evidence="3 5">
    <original>Y</original>
    <variation>F</variation>
    <location>
        <position position="231"/>
    </location>
</feature>
<feature type="mutagenesis site" description="Strongly reduced UDP-glucuronic acid decarboxylase activity, caused by a local unfolding of the active site that allows for a rotation of the dimer interface, leading to the formation of a homohexamer." evidence="5">
    <original>R</original>
    <variation>H</variation>
    <location>
        <position position="236"/>
    </location>
</feature>
<feature type="mutagenesis site" description="Strongly reduced UDP-glucuronic acid decarboxylase activity." evidence="3">
    <original>R</original>
    <variation>Q</variation>
    <location>
        <position position="361"/>
    </location>
</feature>
<feature type="strand" evidence="20">
    <location>
        <begin position="90"/>
        <end position="94"/>
    </location>
</feature>
<feature type="turn" evidence="20">
    <location>
        <begin position="95"/>
        <end position="97"/>
    </location>
</feature>
<feature type="helix" evidence="20">
    <location>
        <begin position="99"/>
        <end position="110"/>
    </location>
</feature>
<feature type="strand" evidence="20">
    <location>
        <begin position="114"/>
        <end position="119"/>
    </location>
</feature>
<feature type="strand" evidence="21">
    <location>
        <begin position="122"/>
        <end position="124"/>
    </location>
</feature>
<feature type="helix" evidence="20">
    <location>
        <begin position="126"/>
        <end position="128"/>
    </location>
</feature>
<feature type="helix" evidence="20">
    <location>
        <begin position="130"/>
        <end position="132"/>
    </location>
</feature>
<feature type="strand" evidence="20">
    <location>
        <begin position="138"/>
        <end position="142"/>
    </location>
</feature>
<feature type="strand" evidence="20">
    <location>
        <begin position="154"/>
        <end position="158"/>
    </location>
</feature>
<feature type="helix" evidence="20">
    <location>
        <begin position="165"/>
        <end position="168"/>
    </location>
</feature>
<feature type="helix" evidence="20">
    <location>
        <begin position="172"/>
        <end position="193"/>
    </location>
</feature>
<feature type="strand" evidence="20">
    <location>
        <begin position="196"/>
        <end position="202"/>
    </location>
</feature>
<feature type="helix" evidence="20">
    <location>
        <begin position="203"/>
        <end position="206"/>
    </location>
</feature>
<feature type="strand" evidence="20">
    <location>
        <begin position="210"/>
        <end position="214"/>
    </location>
</feature>
<feature type="strand" evidence="20">
    <location>
        <begin position="224"/>
        <end position="226"/>
    </location>
</feature>
<feature type="helix" evidence="20">
    <location>
        <begin position="229"/>
        <end position="249"/>
    </location>
</feature>
<feature type="strand" evidence="20">
    <location>
        <begin position="253"/>
        <end position="258"/>
    </location>
</feature>
<feature type="helix" evidence="20">
    <location>
        <begin position="273"/>
        <end position="283"/>
    </location>
</feature>
<feature type="strand" evidence="20">
    <location>
        <begin position="287"/>
        <end position="293"/>
    </location>
</feature>
<feature type="strand" evidence="20">
    <location>
        <begin position="296"/>
        <end position="298"/>
    </location>
</feature>
<feature type="helix" evidence="20">
    <location>
        <begin position="302"/>
        <end position="313"/>
    </location>
</feature>
<feature type="strand" evidence="20">
    <location>
        <begin position="321"/>
        <end position="324"/>
    </location>
</feature>
<feature type="strand" evidence="20">
    <location>
        <begin position="328"/>
        <end position="330"/>
    </location>
</feature>
<feature type="helix" evidence="20">
    <location>
        <begin position="331"/>
        <end position="342"/>
    </location>
</feature>
<feature type="strand" evidence="20">
    <location>
        <begin position="348"/>
        <end position="351"/>
    </location>
</feature>
<feature type="helix" evidence="20">
    <location>
        <begin position="366"/>
        <end position="372"/>
    </location>
</feature>
<feature type="helix" evidence="20">
    <location>
        <begin position="380"/>
        <end position="398"/>
    </location>
</feature>
<reference key="1">
    <citation type="journal article" date="2002" name="Proc. Natl. Acad. Sci. U.S.A.">
        <title>The SQV-1 UDP-glucuronic acid decarboxylase and the SQV-7 nucleotide-sugar transporter may act in the Golgi apparatus to affect Caenorhabditis elegans vulval morphogenesis and embryonic development.</title>
        <authorList>
            <person name="Hwang H.-Y."/>
            <person name="Horvitz H.R."/>
        </authorList>
    </citation>
    <scope>NUCLEOTIDE SEQUENCE [MRNA]</scope>
    <scope>ALTERNATIVE SPLICING</scope>
</reference>
<reference key="2">
    <citation type="journal article" date="2003" name="Genome Res.">
        <title>The secreted protein discovery initiative (SPDI), a large-scale effort to identify novel human secreted and transmembrane proteins: a bioinformatics assessment.</title>
        <authorList>
            <person name="Clark H.F."/>
            <person name="Gurney A.L."/>
            <person name="Abaya E."/>
            <person name="Baker K."/>
            <person name="Baldwin D.T."/>
            <person name="Brush J."/>
            <person name="Chen J."/>
            <person name="Chow B."/>
            <person name="Chui C."/>
            <person name="Crowley C."/>
            <person name="Currell B."/>
            <person name="Deuel B."/>
            <person name="Dowd P."/>
            <person name="Eaton D."/>
            <person name="Foster J.S."/>
            <person name="Grimaldi C."/>
            <person name="Gu Q."/>
            <person name="Hass P.E."/>
            <person name="Heldens S."/>
            <person name="Huang A."/>
            <person name="Kim H.S."/>
            <person name="Klimowski L."/>
            <person name="Jin Y."/>
            <person name="Johnson S."/>
            <person name="Lee J."/>
            <person name="Lewis L."/>
            <person name="Liao D."/>
            <person name="Mark M.R."/>
            <person name="Robbie E."/>
            <person name="Sanchez C."/>
            <person name="Schoenfeld J."/>
            <person name="Seshagiri S."/>
            <person name="Simmons L."/>
            <person name="Singh J."/>
            <person name="Smith V."/>
            <person name="Stinson J."/>
            <person name="Vagts A."/>
            <person name="Vandlen R.L."/>
            <person name="Watanabe C."/>
            <person name="Wieand D."/>
            <person name="Woods K."/>
            <person name="Xie M.-H."/>
            <person name="Yansura D.G."/>
            <person name="Yi S."/>
            <person name="Yu G."/>
            <person name="Yuan J."/>
            <person name="Zhang M."/>
            <person name="Zhang Z."/>
            <person name="Goddard A.D."/>
            <person name="Wood W.I."/>
            <person name="Godowski P.J."/>
            <person name="Gray A.M."/>
        </authorList>
    </citation>
    <scope>NUCLEOTIDE SEQUENCE [LARGE SCALE MRNA] (ISOFORM 1)</scope>
</reference>
<reference key="3">
    <citation type="journal article" date="2004" name="Nat. Genet.">
        <title>Complete sequencing and characterization of 21,243 full-length human cDNAs.</title>
        <authorList>
            <person name="Ota T."/>
            <person name="Suzuki Y."/>
            <person name="Nishikawa T."/>
            <person name="Otsuki T."/>
            <person name="Sugiyama T."/>
            <person name="Irie R."/>
            <person name="Wakamatsu A."/>
            <person name="Hayashi K."/>
            <person name="Sato H."/>
            <person name="Nagai K."/>
            <person name="Kimura K."/>
            <person name="Makita H."/>
            <person name="Sekine M."/>
            <person name="Obayashi M."/>
            <person name="Nishi T."/>
            <person name="Shibahara T."/>
            <person name="Tanaka T."/>
            <person name="Ishii S."/>
            <person name="Yamamoto J."/>
            <person name="Saito K."/>
            <person name="Kawai Y."/>
            <person name="Isono Y."/>
            <person name="Nakamura Y."/>
            <person name="Nagahari K."/>
            <person name="Murakami K."/>
            <person name="Yasuda T."/>
            <person name="Iwayanagi T."/>
            <person name="Wagatsuma M."/>
            <person name="Shiratori A."/>
            <person name="Sudo H."/>
            <person name="Hosoiri T."/>
            <person name="Kaku Y."/>
            <person name="Kodaira H."/>
            <person name="Kondo H."/>
            <person name="Sugawara M."/>
            <person name="Takahashi M."/>
            <person name="Kanda K."/>
            <person name="Yokoi T."/>
            <person name="Furuya T."/>
            <person name="Kikkawa E."/>
            <person name="Omura Y."/>
            <person name="Abe K."/>
            <person name="Kamihara K."/>
            <person name="Katsuta N."/>
            <person name="Sato K."/>
            <person name="Tanikawa M."/>
            <person name="Yamazaki M."/>
            <person name="Ninomiya K."/>
            <person name="Ishibashi T."/>
            <person name="Yamashita H."/>
            <person name="Murakawa K."/>
            <person name="Fujimori K."/>
            <person name="Tanai H."/>
            <person name="Kimata M."/>
            <person name="Watanabe M."/>
            <person name="Hiraoka S."/>
            <person name="Chiba Y."/>
            <person name="Ishida S."/>
            <person name="Ono Y."/>
            <person name="Takiguchi S."/>
            <person name="Watanabe S."/>
            <person name="Yosida M."/>
            <person name="Hotuta T."/>
            <person name="Kusano J."/>
            <person name="Kanehori K."/>
            <person name="Takahashi-Fujii A."/>
            <person name="Hara H."/>
            <person name="Tanase T.-O."/>
            <person name="Nomura Y."/>
            <person name="Togiya S."/>
            <person name="Komai F."/>
            <person name="Hara R."/>
            <person name="Takeuchi K."/>
            <person name="Arita M."/>
            <person name="Imose N."/>
            <person name="Musashino K."/>
            <person name="Yuuki H."/>
            <person name="Oshima A."/>
            <person name="Sasaki N."/>
            <person name="Aotsuka S."/>
            <person name="Yoshikawa Y."/>
            <person name="Matsunawa H."/>
            <person name="Ichihara T."/>
            <person name="Shiohata N."/>
            <person name="Sano S."/>
            <person name="Moriya S."/>
            <person name="Momiyama H."/>
            <person name="Satoh N."/>
            <person name="Takami S."/>
            <person name="Terashima Y."/>
            <person name="Suzuki O."/>
            <person name="Nakagawa S."/>
            <person name="Senoh A."/>
            <person name="Mizoguchi H."/>
            <person name="Goto Y."/>
            <person name="Shimizu F."/>
            <person name="Wakebe H."/>
            <person name="Hishigaki H."/>
            <person name="Watanabe T."/>
            <person name="Sugiyama A."/>
            <person name="Takemoto M."/>
            <person name="Kawakami B."/>
            <person name="Yamazaki M."/>
            <person name="Watanabe K."/>
            <person name="Kumagai A."/>
            <person name="Itakura S."/>
            <person name="Fukuzumi Y."/>
            <person name="Fujimori Y."/>
            <person name="Komiyama M."/>
            <person name="Tashiro H."/>
            <person name="Tanigami A."/>
            <person name="Fujiwara T."/>
            <person name="Ono T."/>
            <person name="Yamada K."/>
            <person name="Fujii Y."/>
            <person name="Ozaki K."/>
            <person name="Hirao M."/>
            <person name="Ohmori Y."/>
            <person name="Kawabata A."/>
            <person name="Hikiji T."/>
            <person name="Kobatake N."/>
            <person name="Inagaki H."/>
            <person name="Ikema Y."/>
            <person name="Okamoto S."/>
            <person name="Okitani R."/>
            <person name="Kawakami T."/>
            <person name="Noguchi S."/>
            <person name="Itoh T."/>
            <person name="Shigeta K."/>
            <person name="Senba T."/>
            <person name="Matsumura K."/>
            <person name="Nakajima Y."/>
            <person name="Mizuno T."/>
            <person name="Morinaga M."/>
            <person name="Sasaki M."/>
            <person name="Togashi T."/>
            <person name="Oyama M."/>
            <person name="Hata H."/>
            <person name="Watanabe M."/>
            <person name="Komatsu T."/>
            <person name="Mizushima-Sugano J."/>
            <person name="Satoh T."/>
            <person name="Shirai Y."/>
            <person name="Takahashi Y."/>
            <person name="Nakagawa K."/>
            <person name="Okumura K."/>
            <person name="Nagase T."/>
            <person name="Nomura N."/>
            <person name="Kikuchi H."/>
            <person name="Masuho Y."/>
            <person name="Yamashita R."/>
            <person name="Nakai K."/>
            <person name="Yada T."/>
            <person name="Nakamura Y."/>
            <person name="Ohara O."/>
            <person name="Isogai T."/>
            <person name="Sugano S."/>
        </authorList>
    </citation>
    <scope>NUCLEOTIDE SEQUENCE [LARGE SCALE MRNA] (ISOFORMS 1; 2 AND 3)</scope>
    <source>
        <tissue>Placenta</tissue>
    </source>
</reference>
<reference key="4">
    <citation type="journal article" date="2005" name="Nature">
        <title>Generation and annotation of the DNA sequences of human chromosomes 2 and 4.</title>
        <authorList>
            <person name="Hillier L.W."/>
            <person name="Graves T.A."/>
            <person name="Fulton R.S."/>
            <person name="Fulton L.A."/>
            <person name="Pepin K.H."/>
            <person name="Minx P."/>
            <person name="Wagner-McPherson C."/>
            <person name="Layman D."/>
            <person name="Wylie K."/>
            <person name="Sekhon M."/>
            <person name="Becker M.C."/>
            <person name="Fewell G.A."/>
            <person name="Delehaunty K.D."/>
            <person name="Miner T.L."/>
            <person name="Nash W.E."/>
            <person name="Kremitzki C."/>
            <person name="Oddy L."/>
            <person name="Du H."/>
            <person name="Sun H."/>
            <person name="Bradshaw-Cordum H."/>
            <person name="Ali J."/>
            <person name="Carter J."/>
            <person name="Cordes M."/>
            <person name="Harris A."/>
            <person name="Isak A."/>
            <person name="van Brunt A."/>
            <person name="Nguyen C."/>
            <person name="Du F."/>
            <person name="Courtney L."/>
            <person name="Kalicki J."/>
            <person name="Ozersky P."/>
            <person name="Abbott S."/>
            <person name="Armstrong J."/>
            <person name="Belter E.A."/>
            <person name="Caruso L."/>
            <person name="Cedroni M."/>
            <person name="Cotton M."/>
            <person name="Davidson T."/>
            <person name="Desai A."/>
            <person name="Elliott G."/>
            <person name="Erb T."/>
            <person name="Fronick C."/>
            <person name="Gaige T."/>
            <person name="Haakenson W."/>
            <person name="Haglund K."/>
            <person name="Holmes A."/>
            <person name="Harkins R."/>
            <person name="Kim K."/>
            <person name="Kruchowski S.S."/>
            <person name="Strong C.M."/>
            <person name="Grewal N."/>
            <person name="Goyea E."/>
            <person name="Hou S."/>
            <person name="Levy A."/>
            <person name="Martinka S."/>
            <person name="Mead K."/>
            <person name="McLellan M.D."/>
            <person name="Meyer R."/>
            <person name="Randall-Maher J."/>
            <person name="Tomlinson C."/>
            <person name="Dauphin-Kohlberg S."/>
            <person name="Kozlowicz-Reilly A."/>
            <person name="Shah N."/>
            <person name="Swearengen-Shahid S."/>
            <person name="Snider J."/>
            <person name="Strong J.T."/>
            <person name="Thompson J."/>
            <person name="Yoakum M."/>
            <person name="Leonard S."/>
            <person name="Pearman C."/>
            <person name="Trani L."/>
            <person name="Radionenko M."/>
            <person name="Waligorski J.E."/>
            <person name="Wang C."/>
            <person name="Rock S.M."/>
            <person name="Tin-Wollam A.-M."/>
            <person name="Maupin R."/>
            <person name="Latreille P."/>
            <person name="Wendl M.C."/>
            <person name="Yang S.-P."/>
            <person name="Pohl C."/>
            <person name="Wallis J.W."/>
            <person name="Spieth J."/>
            <person name="Bieri T.A."/>
            <person name="Berkowicz N."/>
            <person name="Nelson J.O."/>
            <person name="Osborne J."/>
            <person name="Ding L."/>
            <person name="Meyer R."/>
            <person name="Sabo A."/>
            <person name="Shotland Y."/>
            <person name="Sinha P."/>
            <person name="Wohldmann P.E."/>
            <person name="Cook L.L."/>
            <person name="Hickenbotham M.T."/>
            <person name="Eldred J."/>
            <person name="Williams D."/>
            <person name="Jones T.A."/>
            <person name="She X."/>
            <person name="Ciccarelli F.D."/>
            <person name="Izaurralde E."/>
            <person name="Taylor J."/>
            <person name="Schmutz J."/>
            <person name="Myers R.M."/>
            <person name="Cox D.R."/>
            <person name="Huang X."/>
            <person name="McPherson J.D."/>
            <person name="Mardis E.R."/>
            <person name="Clifton S.W."/>
            <person name="Warren W.C."/>
            <person name="Chinwalla A.T."/>
            <person name="Eddy S.R."/>
            <person name="Marra M.A."/>
            <person name="Ovcharenko I."/>
            <person name="Furey T.S."/>
            <person name="Miller W."/>
            <person name="Eichler E.E."/>
            <person name="Bork P."/>
            <person name="Suyama M."/>
            <person name="Torrents D."/>
            <person name="Waterston R.H."/>
            <person name="Wilson R.K."/>
        </authorList>
    </citation>
    <scope>NUCLEOTIDE SEQUENCE [LARGE SCALE GENOMIC DNA]</scope>
</reference>
<reference key="5">
    <citation type="journal article" date="2004" name="Genome Res.">
        <title>The status, quality, and expansion of the NIH full-length cDNA project: the Mammalian Gene Collection (MGC).</title>
        <authorList>
            <consortium name="The MGC Project Team"/>
        </authorList>
    </citation>
    <scope>NUCLEOTIDE SEQUENCE [LARGE SCALE MRNA] (ISOFORM 1)</scope>
    <source>
        <tissue>Placenta</tissue>
    </source>
</reference>
<reference key="6">
    <citation type="journal article" date="2009" name="Sci. Signal.">
        <title>Quantitative phosphoproteomic analysis of T cell receptor signaling reveals system-wide modulation of protein-protein interactions.</title>
        <authorList>
            <person name="Mayya V."/>
            <person name="Lundgren D.H."/>
            <person name="Hwang S.-I."/>
            <person name="Rezaul K."/>
            <person name="Wu L."/>
            <person name="Eng J.K."/>
            <person name="Rodionov V."/>
            <person name="Han D.K."/>
        </authorList>
    </citation>
    <scope>PHOSPHORYLATION [LARGE SCALE ANALYSIS] AT THR-94</scope>
    <scope>IDENTIFICATION BY MASS SPECTROMETRY [LARGE SCALE ANALYSIS]</scope>
    <source>
        <tissue>Leukemic T-cell</tissue>
    </source>
</reference>
<reference key="7">
    <citation type="journal article" date="2012" name="Proc. Natl. Acad. Sci. U.S.A.">
        <title>N-terminal acetylome analyses and functional insights of the N-terminal acetyltransferase NatB.</title>
        <authorList>
            <person name="Van Damme P."/>
            <person name="Lasa M."/>
            <person name="Polevoda B."/>
            <person name="Gazquez C."/>
            <person name="Elosegui-Artola A."/>
            <person name="Kim D.S."/>
            <person name="De Juan-Pardo E."/>
            <person name="Demeyer K."/>
            <person name="Hole K."/>
            <person name="Larrea E."/>
            <person name="Timmerman E."/>
            <person name="Prieto J."/>
            <person name="Arnesen T."/>
            <person name="Sherman F."/>
            <person name="Gevaert K."/>
            <person name="Aldabe R."/>
        </authorList>
    </citation>
    <scope>IDENTIFICATION BY MASS SPECTROMETRY [LARGE SCALE ANALYSIS]</scope>
</reference>
<reference key="8">
    <citation type="journal article" date="2013" name="Biochemistry">
        <title>Human UDP-alpha-d-xylose synthase forms a catalytically important tetramer that has not been observed in crystal structures.</title>
        <authorList>
            <person name="Polizzi S.J."/>
            <person name="Walsh R.M. Jr."/>
            <person name="Le Magueres P."/>
            <person name="Criswell A.R."/>
            <person name="Wood Z.A."/>
        </authorList>
    </citation>
    <scope>FUNCTION</scope>
    <scope>CATALYTIC ACTIVITY</scope>
</reference>
<reference key="9">
    <citation type="journal article" date="2015" name="Cell Rep.">
        <title>An organellar nalpha-acetyltransferase, naa60, acetylates cytosolic N termini of transmembrane proteins and maintains Golgi integrity.</title>
        <authorList>
            <person name="Aksnes H."/>
            <person name="Van Damme P."/>
            <person name="Goris M."/>
            <person name="Starheim K.K."/>
            <person name="Marie M."/>
            <person name="Stoeve S.I."/>
            <person name="Hoel C."/>
            <person name="Kalvik T.V."/>
            <person name="Hole K."/>
            <person name="Glomnes N."/>
            <person name="Furnes C."/>
            <person name="Ljostveit S."/>
            <person name="Ziegler M."/>
            <person name="Niere M."/>
            <person name="Gevaert K."/>
            <person name="Arnesen T."/>
        </authorList>
    </citation>
    <scope>ACETYLATION AT MET-1</scope>
</reference>
<reference key="10">
    <citation type="journal article" date="2015" name="Proteomics">
        <title>N-terminome analysis of the human mitochondrial proteome.</title>
        <authorList>
            <person name="Vaca Jacome A.S."/>
            <person name="Rabilloud T."/>
            <person name="Schaeffer-Reiss C."/>
            <person name="Rompais M."/>
            <person name="Ayoub D."/>
            <person name="Lane L."/>
            <person name="Bairoch A."/>
            <person name="Van Dorsselaer A."/>
            <person name="Carapito C."/>
        </authorList>
    </citation>
    <scope>IDENTIFICATION BY MASS SPECTROMETRY [LARGE SCALE ANALYSIS]</scope>
</reference>
<reference evidence="16" key="11">
    <citation type="journal article" date="2012" name="J. Biol. Chem.">
        <title>Structure and mechanism of human UDP-xylose synthase: evidence for a promoting role of sugar ring distortion in a three-step catalytic conversion of UDP-glucuronic acid.</title>
        <authorList>
            <person name="Eixelsberger T."/>
            <person name="Sykora S."/>
            <person name="Egger S."/>
            <person name="Brunsteiner M."/>
            <person name="Kavanagh K.L."/>
            <person name="Oppermann U."/>
            <person name="Brecker L."/>
            <person name="Nidetzky B."/>
        </authorList>
    </citation>
    <scope>X-RAY CRYSTALLOGRAPHY (1.21 ANGSTROMS) OF 85-402 IN COMPLEX WITH NAD(+) AND UDP</scope>
    <scope>FUNCTION</scope>
    <scope>CATALYTIC ACTIVITY</scope>
    <scope>BIOPHYSICOCHEMICAL PROPERTIES</scope>
    <scope>COFACTOR</scope>
    <scope>ACTIVE SITE</scope>
    <scope>MUTAGENESIS OF GLU-204; TYR-231 AND ARG-361</scope>
</reference>
<reference evidence="17 18" key="12">
    <citation type="journal article" date="2015" name="Biochemistry">
        <title>Man o' war mutation in UDP-alpha-D-xylose synthase favors the abortive catalytic cycle and uncovers a latent potential for hexamer formation.</title>
        <authorList>
            <person name="Walsh R.M."/>
            <person name="Polizzi S.J."/>
            <person name="Kadirvelraj R."/>
            <person name="Howard W.W."/>
            <person name="Wood Z.A."/>
        </authorList>
    </citation>
    <scope>X-RAY CRYSTALLOGRAPHY (2.64 ANGSTROMS) OF MUTANT HIS-236 85-420 IN COMPLEX WITH NAD(+) AND UDP-ALPHA-D-GLUCURONATE</scope>
    <scope>FUNCTION</scope>
    <scope>CATALYTIC ACTIVITY</scope>
    <scope>COFACTOR</scope>
    <scope>ACTIVE SITE</scope>
    <scope>MUTAGENESIS OF TYR-231 AND ARG-236</scope>
</reference>
<sequence length="420" mass="47577">MVSKALLRLVSAVNRRRMKLLLGIALLAYVASVWGNFVNMRSIQENGELKIESKIEEMVEPLREKIRDLEKSFTQKYPPVKFLSEKDRKRILITGGAGFVGSHLTDKLMMDGHEVTVVDNFFTGRKRNVEHWIGHENFELINHDVVEPLYIEVDQIYHLASPASPPNYMYNPIKTLKTNTIGTLNMLGLAKRVGARLLLASTSEVYGDPEVHPQSEDYWGHVNPIGPRACYDEGKRVAETMCYAYMKQEGVEVRVARIFNTFGPRMHMNDGRVVSNFILQALQGEPLTVYGSGSQTRAFQYVSDLVNGLVALMNSNVSSPVNLGNPEEHTILEFAQLIKNLVGSGSEIQFLSEAQDDPQKRKPDIKKAKLMLGWEPVVPLEEGLNKAIHYFRKELEYQANNQYIPKPKPARIKKGRTRHS</sequence>
<gene>
    <name evidence="9 15" type="primary">UXS1</name>
    <name evidence="7" type="ORF">UNQ2538/PRO6079</name>
</gene>
<dbReference type="EC" id="4.1.1.35" evidence="3 4 5"/>
<dbReference type="EMBL" id="AY147934">
    <property type="protein sequence ID" value="AAN39844.1"/>
    <property type="molecule type" value="mRNA"/>
</dbReference>
<dbReference type="EMBL" id="AY358541">
    <property type="protein sequence ID" value="AAQ88905.1"/>
    <property type="molecule type" value="mRNA"/>
</dbReference>
<dbReference type="EMBL" id="AK027244">
    <property type="protein sequence ID" value="BAB15705.1"/>
    <property type="molecule type" value="mRNA"/>
</dbReference>
<dbReference type="EMBL" id="AK075120">
    <property type="protein sequence ID" value="BAC11415.1"/>
    <property type="molecule type" value="mRNA"/>
</dbReference>
<dbReference type="EMBL" id="AK075170">
    <property type="protein sequence ID" value="BAC11448.1"/>
    <property type="molecule type" value="mRNA"/>
</dbReference>
<dbReference type="EMBL" id="AC018878">
    <property type="protein sequence ID" value="AAY15085.1"/>
    <property type="molecule type" value="Genomic_DNA"/>
</dbReference>
<dbReference type="EMBL" id="BC009819">
    <property type="protein sequence ID" value="AAH09819.2"/>
    <property type="molecule type" value="mRNA"/>
</dbReference>
<dbReference type="CCDS" id="CCDS46378.1">
    <molecule id="Q8NBZ7-1"/>
</dbReference>
<dbReference type="CCDS" id="CCDS58720.1">
    <molecule id="Q8NBZ7-3"/>
</dbReference>
<dbReference type="CCDS" id="CCDS58721.1">
    <molecule id="Q8NBZ7-2"/>
</dbReference>
<dbReference type="RefSeq" id="NP_001240804.1">
    <molecule id="Q8NBZ7-2"/>
    <property type="nucleotide sequence ID" value="NM_001253875.2"/>
</dbReference>
<dbReference type="RefSeq" id="NP_001240805.1">
    <molecule id="Q8NBZ7-3"/>
    <property type="nucleotide sequence ID" value="NM_001253876.2"/>
</dbReference>
<dbReference type="RefSeq" id="NP_079352.2">
    <molecule id="Q8NBZ7-1"/>
    <property type="nucleotide sequence ID" value="NM_025076.4"/>
</dbReference>
<dbReference type="RefSeq" id="XP_016860503.1">
    <property type="nucleotide sequence ID" value="XM_017005014.1"/>
</dbReference>
<dbReference type="RefSeq" id="XP_024308925.1">
    <molecule id="Q8NBZ7-3"/>
    <property type="nucleotide sequence ID" value="XM_024453157.2"/>
</dbReference>
<dbReference type="RefSeq" id="XP_054200015.1">
    <molecule id="Q8NBZ7-3"/>
    <property type="nucleotide sequence ID" value="XM_054344040.1"/>
</dbReference>
<dbReference type="PDB" id="2B69">
    <property type="method" value="X-ray"/>
    <property type="resolution" value="1.21 A"/>
    <property type="chains" value="A=85-402"/>
</dbReference>
<dbReference type="PDB" id="4GLL">
    <property type="method" value="X-ray"/>
    <property type="resolution" value="2.50 A"/>
    <property type="chains" value="A/B=85-420"/>
</dbReference>
<dbReference type="PDB" id="4LK3">
    <property type="method" value="X-ray"/>
    <property type="resolution" value="2.64 A"/>
    <property type="chains" value="A/B/C/D/E/F=85-420"/>
</dbReference>
<dbReference type="PDB" id="4M55">
    <property type="method" value="X-ray"/>
    <property type="resolution" value="2.86 A"/>
    <property type="chains" value="A/B/C/D/E/F=85-420"/>
</dbReference>
<dbReference type="PDBsum" id="2B69"/>
<dbReference type="PDBsum" id="4GLL"/>
<dbReference type="PDBsum" id="4LK3"/>
<dbReference type="PDBsum" id="4M55"/>
<dbReference type="SMR" id="Q8NBZ7"/>
<dbReference type="BioGRID" id="123139">
    <property type="interactions" value="116"/>
</dbReference>
<dbReference type="FunCoup" id="Q8NBZ7">
    <property type="interactions" value="826"/>
</dbReference>
<dbReference type="IntAct" id="Q8NBZ7">
    <property type="interactions" value="81"/>
</dbReference>
<dbReference type="MINT" id="Q8NBZ7"/>
<dbReference type="STRING" id="9606.ENSP00000283148"/>
<dbReference type="GlyCosmos" id="Q8NBZ7">
    <property type="glycosylation" value="1 site, No reported glycans"/>
</dbReference>
<dbReference type="GlyGen" id="Q8NBZ7">
    <property type="glycosylation" value="2 sites, 1 O-linked glycan (1 site)"/>
</dbReference>
<dbReference type="iPTMnet" id="Q8NBZ7"/>
<dbReference type="PhosphoSitePlus" id="Q8NBZ7"/>
<dbReference type="BioMuta" id="UXS1"/>
<dbReference type="DMDM" id="74730150"/>
<dbReference type="jPOST" id="Q8NBZ7"/>
<dbReference type="MassIVE" id="Q8NBZ7"/>
<dbReference type="PaxDb" id="9606-ENSP00000283148"/>
<dbReference type="PeptideAtlas" id="Q8NBZ7"/>
<dbReference type="ProteomicsDB" id="72836">
    <molecule id="Q8NBZ7-1"/>
</dbReference>
<dbReference type="ProteomicsDB" id="72837">
    <molecule id="Q8NBZ7-2"/>
</dbReference>
<dbReference type="ProteomicsDB" id="72838">
    <molecule id="Q8NBZ7-3"/>
</dbReference>
<dbReference type="Pumba" id="Q8NBZ7"/>
<dbReference type="Antibodypedia" id="1921">
    <property type="antibodies" value="121 antibodies from 18 providers"/>
</dbReference>
<dbReference type="DNASU" id="80146"/>
<dbReference type="Ensembl" id="ENST00000283148.12">
    <molecule id="Q8NBZ7-2"/>
    <property type="protein sequence ID" value="ENSP00000283148.7"/>
    <property type="gene ID" value="ENSG00000115652.15"/>
</dbReference>
<dbReference type="Ensembl" id="ENST00000409032.5">
    <molecule id="Q8NBZ7-3"/>
    <property type="protein sequence ID" value="ENSP00000387096.1"/>
    <property type="gene ID" value="ENSG00000115652.15"/>
</dbReference>
<dbReference type="Ensembl" id="ENST00000409501.7">
    <molecule id="Q8NBZ7-1"/>
    <property type="protein sequence ID" value="ENSP00000387019.3"/>
    <property type="gene ID" value="ENSG00000115652.15"/>
</dbReference>
<dbReference type="GeneID" id="80146"/>
<dbReference type="KEGG" id="hsa:80146"/>
<dbReference type="MANE-Select" id="ENST00000283148.12">
    <molecule id="Q8NBZ7-2"/>
    <property type="protein sequence ID" value="ENSP00000283148.7"/>
    <property type="RefSeq nucleotide sequence ID" value="NM_001253875.2"/>
    <property type="RefSeq protein sequence ID" value="NP_001240804.1"/>
</dbReference>
<dbReference type="UCSC" id="uc002tdl.4">
    <molecule id="Q8NBZ7-1"/>
    <property type="organism name" value="human"/>
</dbReference>
<dbReference type="AGR" id="HGNC:17729"/>
<dbReference type="CTD" id="80146"/>
<dbReference type="DisGeNET" id="80146"/>
<dbReference type="GeneCards" id="UXS1"/>
<dbReference type="HGNC" id="HGNC:17729">
    <property type="gene designation" value="UXS1"/>
</dbReference>
<dbReference type="HPA" id="ENSG00000115652">
    <property type="expression patterns" value="Low tissue specificity"/>
</dbReference>
<dbReference type="MIM" id="609749">
    <property type="type" value="gene"/>
</dbReference>
<dbReference type="neXtProt" id="NX_Q8NBZ7"/>
<dbReference type="OpenTargets" id="ENSG00000115652"/>
<dbReference type="PharmGKB" id="PA38465"/>
<dbReference type="VEuPathDB" id="HostDB:ENSG00000115652"/>
<dbReference type="eggNOG" id="KOG1429">
    <property type="taxonomic scope" value="Eukaryota"/>
</dbReference>
<dbReference type="GeneTree" id="ENSGT00940000157868"/>
<dbReference type="HOGENOM" id="CLU_007383_4_3_1"/>
<dbReference type="InParanoid" id="Q8NBZ7"/>
<dbReference type="OMA" id="KYPKVKY"/>
<dbReference type="OrthoDB" id="331544at2759"/>
<dbReference type="PAN-GO" id="Q8NBZ7">
    <property type="GO annotations" value="3 GO annotations based on evolutionary models"/>
</dbReference>
<dbReference type="PhylomeDB" id="Q8NBZ7"/>
<dbReference type="TreeFam" id="TF105736"/>
<dbReference type="PathwayCommons" id="Q8NBZ7"/>
<dbReference type="Reactome" id="R-HSA-173599">
    <property type="pathway name" value="Formation of the active cofactor, UDP-glucuronate"/>
</dbReference>
<dbReference type="Reactome" id="R-HSA-1971475">
    <property type="pathway name" value="A tetrasaccharide linker sequence is required for GAG synthesis"/>
</dbReference>
<dbReference type="SignaLink" id="Q8NBZ7"/>
<dbReference type="UniPathway" id="UPA00796">
    <property type="reaction ID" value="UER00771"/>
</dbReference>
<dbReference type="BioGRID-ORCS" id="80146">
    <property type="hits" value="184 hits in 1157 CRISPR screens"/>
</dbReference>
<dbReference type="ChiTaRS" id="UXS1">
    <property type="organism name" value="human"/>
</dbReference>
<dbReference type="EvolutionaryTrace" id="Q8NBZ7"/>
<dbReference type="GeneWiki" id="UXS1"/>
<dbReference type="GenomeRNAi" id="80146"/>
<dbReference type="Pharos" id="Q8NBZ7">
    <property type="development level" value="Tbio"/>
</dbReference>
<dbReference type="PRO" id="PR:Q8NBZ7"/>
<dbReference type="Proteomes" id="UP000005640">
    <property type="component" value="Chromosome 2"/>
</dbReference>
<dbReference type="RNAct" id="Q8NBZ7">
    <property type="molecule type" value="protein"/>
</dbReference>
<dbReference type="Bgee" id="ENSG00000115652">
    <property type="expression patterns" value="Expressed in secondary oocyte and 205 other cell types or tissues"/>
</dbReference>
<dbReference type="ExpressionAtlas" id="Q8NBZ7">
    <property type="expression patterns" value="baseline and differential"/>
</dbReference>
<dbReference type="GO" id="GO:1902494">
    <property type="term" value="C:catalytic complex"/>
    <property type="evidence" value="ECO:0000314"/>
    <property type="project" value="UniProtKB"/>
</dbReference>
<dbReference type="GO" id="GO:0005737">
    <property type="term" value="C:cytoplasm"/>
    <property type="evidence" value="ECO:0000318"/>
    <property type="project" value="GO_Central"/>
</dbReference>
<dbReference type="GO" id="GO:0070062">
    <property type="term" value="C:extracellular exosome"/>
    <property type="evidence" value="ECO:0007005"/>
    <property type="project" value="UniProtKB"/>
</dbReference>
<dbReference type="GO" id="GO:0032580">
    <property type="term" value="C:Golgi cisterna membrane"/>
    <property type="evidence" value="ECO:0007669"/>
    <property type="project" value="UniProtKB-SubCell"/>
</dbReference>
<dbReference type="GO" id="GO:0000139">
    <property type="term" value="C:Golgi membrane"/>
    <property type="evidence" value="ECO:0000304"/>
    <property type="project" value="Reactome"/>
</dbReference>
<dbReference type="GO" id="GO:0042802">
    <property type="term" value="F:identical protein binding"/>
    <property type="evidence" value="ECO:0000353"/>
    <property type="project" value="UniProtKB"/>
</dbReference>
<dbReference type="GO" id="GO:0070403">
    <property type="term" value="F:NAD+ binding"/>
    <property type="evidence" value="ECO:0000314"/>
    <property type="project" value="UniProtKB"/>
</dbReference>
<dbReference type="GO" id="GO:0042803">
    <property type="term" value="F:protein homodimerization activity"/>
    <property type="evidence" value="ECO:0000314"/>
    <property type="project" value="UniProtKB"/>
</dbReference>
<dbReference type="GO" id="GO:0048040">
    <property type="term" value="F:UDP-glucuronate decarboxylase activity"/>
    <property type="evidence" value="ECO:0000314"/>
    <property type="project" value="UniProtKB"/>
</dbReference>
<dbReference type="GO" id="GO:0042732">
    <property type="term" value="P:D-xylose metabolic process"/>
    <property type="evidence" value="ECO:0007669"/>
    <property type="project" value="InterPro"/>
</dbReference>
<dbReference type="GO" id="GO:0033320">
    <property type="term" value="P:UDP-D-xylose biosynthetic process"/>
    <property type="evidence" value="ECO:0000314"/>
    <property type="project" value="UniProtKB"/>
</dbReference>
<dbReference type="CDD" id="cd05230">
    <property type="entry name" value="UGD_SDR_e"/>
    <property type="match status" value="1"/>
</dbReference>
<dbReference type="FunFam" id="3.40.50.720:FF:000065">
    <property type="entry name" value="UDP-glucuronic acid decarboxylase 1"/>
    <property type="match status" value="1"/>
</dbReference>
<dbReference type="Gene3D" id="3.40.50.720">
    <property type="entry name" value="NAD(P)-binding Rossmann-like Domain"/>
    <property type="match status" value="2"/>
</dbReference>
<dbReference type="InterPro" id="IPR016040">
    <property type="entry name" value="NAD(P)-bd_dom"/>
</dbReference>
<dbReference type="InterPro" id="IPR036291">
    <property type="entry name" value="NAD(P)-bd_dom_sf"/>
</dbReference>
<dbReference type="InterPro" id="IPR044516">
    <property type="entry name" value="UXS-like"/>
</dbReference>
<dbReference type="InterPro" id="IPR021761">
    <property type="entry name" value="UXS1_N"/>
</dbReference>
<dbReference type="PANTHER" id="PTHR43078:SF6">
    <property type="entry name" value="UDP-GLUCURONIC ACID DECARBOXYLASE 1"/>
    <property type="match status" value="1"/>
</dbReference>
<dbReference type="PANTHER" id="PTHR43078">
    <property type="entry name" value="UDP-GLUCURONIC ACID DECARBOXYLASE-RELATED"/>
    <property type="match status" value="1"/>
</dbReference>
<dbReference type="Pfam" id="PF16363">
    <property type="entry name" value="GDP_Man_Dehyd"/>
    <property type="match status" value="1"/>
</dbReference>
<dbReference type="Pfam" id="PF11803">
    <property type="entry name" value="UXS1_N"/>
    <property type="match status" value="1"/>
</dbReference>
<dbReference type="SUPFAM" id="SSF51735">
    <property type="entry name" value="NAD(P)-binding Rossmann-fold domains"/>
    <property type="match status" value="1"/>
</dbReference>
<organism>
    <name type="scientific">Homo sapiens</name>
    <name type="common">Human</name>
    <dbReference type="NCBI Taxonomy" id="9606"/>
    <lineage>
        <taxon>Eukaryota</taxon>
        <taxon>Metazoa</taxon>
        <taxon>Chordata</taxon>
        <taxon>Craniata</taxon>
        <taxon>Vertebrata</taxon>
        <taxon>Euteleostomi</taxon>
        <taxon>Mammalia</taxon>
        <taxon>Eutheria</taxon>
        <taxon>Euarchontoglires</taxon>
        <taxon>Primates</taxon>
        <taxon>Haplorrhini</taxon>
        <taxon>Catarrhini</taxon>
        <taxon>Hominidae</taxon>
        <taxon>Homo</taxon>
    </lineage>
</organism>
<accession>Q8NBZ7</accession>
<accession>Q8NBX3</accession>
<accession>Q9H5C2</accession>